<dbReference type="EC" id="6.3.5.-" evidence="1"/>
<dbReference type="EMBL" id="CP000108">
    <property type="protein sequence ID" value="ABB29123.1"/>
    <property type="molecule type" value="Genomic_DNA"/>
</dbReference>
<dbReference type="SMR" id="Q3APF2"/>
<dbReference type="STRING" id="340177.Cag_1873"/>
<dbReference type="KEGG" id="cch:Cag_1873"/>
<dbReference type="eggNOG" id="COG0064">
    <property type="taxonomic scope" value="Bacteria"/>
</dbReference>
<dbReference type="HOGENOM" id="CLU_019240_0_0_10"/>
<dbReference type="OrthoDB" id="9804078at2"/>
<dbReference type="GO" id="GO:0050566">
    <property type="term" value="F:asparaginyl-tRNA synthase (glutamine-hydrolyzing) activity"/>
    <property type="evidence" value="ECO:0007669"/>
    <property type="project" value="RHEA"/>
</dbReference>
<dbReference type="GO" id="GO:0005524">
    <property type="term" value="F:ATP binding"/>
    <property type="evidence" value="ECO:0007669"/>
    <property type="project" value="UniProtKB-KW"/>
</dbReference>
<dbReference type="GO" id="GO:0050567">
    <property type="term" value="F:glutaminyl-tRNA synthase (glutamine-hydrolyzing) activity"/>
    <property type="evidence" value="ECO:0007669"/>
    <property type="project" value="UniProtKB-UniRule"/>
</dbReference>
<dbReference type="GO" id="GO:0070681">
    <property type="term" value="P:glutaminyl-tRNAGln biosynthesis via transamidation"/>
    <property type="evidence" value="ECO:0007669"/>
    <property type="project" value="TreeGrafter"/>
</dbReference>
<dbReference type="GO" id="GO:0006412">
    <property type="term" value="P:translation"/>
    <property type="evidence" value="ECO:0007669"/>
    <property type="project" value="UniProtKB-UniRule"/>
</dbReference>
<dbReference type="FunFam" id="1.10.10.410:FF:000001">
    <property type="entry name" value="Aspartyl/glutamyl-tRNA(Asn/Gln) amidotransferase subunit B"/>
    <property type="match status" value="1"/>
</dbReference>
<dbReference type="FunFam" id="1.10.150.380:FF:000001">
    <property type="entry name" value="Aspartyl/glutamyl-tRNA(Asn/Gln) amidotransferase subunit B"/>
    <property type="match status" value="1"/>
</dbReference>
<dbReference type="Gene3D" id="1.10.10.410">
    <property type="match status" value="1"/>
</dbReference>
<dbReference type="Gene3D" id="1.10.150.380">
    <property type="entry name" value="GatB domain, N-terminal subdomain"/>
    <property type="match status" value="1"/>
</dbReference>
<dbReference type="HAMAP" id="MF_00121">
    <property type="entry name" value="GatB"/>
    <property type="match status" value="1"/>
</dbReference>
<dbReference type="InterPro" id="IPR017959">
    <property type="entry name" value="Asn/Gln-tRNA_amidoTrfase_suB/E"/>
</dbReference>
<dbReference type="InterPro" id="IPR006075">
    <property type="entry name" value="Asn/Gln-tRNA_Trfase_suB/E_cat"/>
</dbReference>
<dbReference type="InterPro" id="IPR018027">
    <property type="entry name" value="Asn/Gln_amidotransferase"/>
</dbReference>
<dbReference type="InterPro" id="IPR003789">
    <property type="entry name" value="Asn/Gln_tRNA_amidoTrase-B-like"/>
</dbReference>
<dbReference type="InterPro" id="IPR004413">
    <property type="entry name" value="GatB"/>
</dbReference>
<dbReference type="InterPro" id="IPR042114">
    <property type="entry name" value="GatB_C_1"/>
</dbReference>
<dbReference type="InterPro" id="IPR023168">
    <property type="entry name" value="GatB_Yqey_C_2"/>
</dbReference>
<dbReference type="InterPro" id="IPR017958">
    <property type="entry name" value="Gln-tRNA_amidoTrfase_suB_CS"/>
</dbReference>
<dbReference type="InterPro" id="IPR014746">
    <property type="entry name" value="Gln_synth/guanido_kin_cat_dom"/>
</dbReference>
<dbReference type="NCBIfam" id="TIGR00133">
    <property type="entry name" value="gatB"/>
    <property type="match status" value="1"/>
</dbReference>
<dbReference type="NCBIfam" id="NF004012">
    <property type="entry name" value="PRK05477.1-2"/>
    <property type="match status" value="1"/>
</dbReference>
<dbReference type="NCBIfam" id="NF004014">
    <property type="entry name" value="PRK05477.1-4"/>
    <property type="match status" value="1"/>
</dbReference>
<dbReference type="NCBIfam" id="NF004015">
    <property type="entry name" value="PRK05477.1-5"/>
    <property type="match status" value="1"/>
</dbReference>
<dbReference type="PANTHER" id="PTHR11659">
    <property type="entry name" value="GLUTAMYL-TRNA GLN AMIDOTRANSFERASE SUBUNIT B MITOCHONDRIAL AND PROKARYOTIC PET112-RELATED"/>
    <property type="match status" value="1"/>
</dbReference>
<dbReference type="PANTHER" id="PTHR11659:SF0">
    <property type="entry name" value="GLUTAMYL-TRNA(GLN) AMIDOTRANSFERASE SUBUNIT B, MITOCHONDRIAL"/>
    <property type="match status" value="1"/>
</dbReference>
<dbReference type="Pfam" id="PF02934">
    <property type="entry name" value="GatB_N"/>
    <property type="match status" value="1"/>
</dbReference>
<dbReference type="Pfam" id="PF02637">
    <property type="entry name" value="GatB_Yqey"/>
    <property type="match status" value="1"/>
</dbReference>
<dbReference type="SMART" id="SM00845">
    <property type="entry name" value="GatB_Yqey"/>
    <property type="match status" value="1"/>
</dbReference>
<dbReference type="SUPFAM" id="SSF89095">
    <property type="entry name" value="GatB/YqeY motif"/>
    <property type="match status" value="1"/>
</dbReference>
<dbReference type="SUPFAM" id="SSF55931">
    <property type="entry name" value="Glutamine synthetase/guanido kinase"/>
    <property type="match status" value="1"/>
</dbReference>
<dbReference type="PROSITE" id="PS01234">
    <property type="entry name" value="GATB"/>
    <property type="match status" value="1"/>
</dbReference>
<comment type="function">
    <text evidence="1">Allows the formation of correctly charged Asn-tRNA(Asn) or Gln-tRNA(Gln) through the transamidation of misacylated Asp-tRNA(Asn) or Glu-tRNA(Gln) in organisms which lack either or both of asparaginyl-tRNA or glutaminyl-tRNA synthetases. The reaction takes place in the presence of glutamine and ATP through an activated phospho-Asp-tRNA(Asn) or phospho-Glu-tRNA(Gln).</text>
</comment>
<comment type="catalytic activity">
    <reaction evidence="1">
        <text>L-glutamyl-tRNA(Gln) + L-glutamine + ATP + H2O = L-glutaminyl-tRNA(Gln) + L-glutamate + ADP + phosphate + H(+)</text>
        <dbReference type="Rhea" id="RHEA:17521"/>
        <dbReference type="Rhea" id="RHEA-COMP:9681"/>
        <dbReference type="Rhea" id="RHEA-COMP:9684"/>
        <dbReference type="ChEBI" id="CHEBI:15377"/>
        <dbReference type="ChEBI" id="CHEBI:15378"/>
        <dbReference type="ChEBI" id="CHEBI:29985"/>
        <dbReference type="ChEBI" id="CHEBI:30616"/>
        <dbReference type="ChEBI" id="CHEBI:43474"/>
        <dbReference type="ChEBI" id="CHEBI:58359"/>
        <dbReference type="ChEBI" id="CHEBI:78520"/>
        <dbReference type="ChEBI" id="CHEBI:78521"/>
        <dbReference type="ChEBI" id="CHEBI:456216"/>
    </reaction>
</comment>
<comment type="catalytic activity">
    <reaction evidence="1">
        <text>L-aspartyl-tRNA(Asn) + L-glutamine + ATP + H2O = L-asparaginyl-tRNA(Asn) + L-glutamate + ADP + phosphate + 2 H(+)</text>
        <dbReference type="Rhea" id="RHEA:14513"/>
        <dbReference type="Rhea" id="RHEA-COMP:9674"/>
        <dbReference type="Rhea" id="RHEA-COMP:9677"/>
        <dbReference type="ChEBI" id="CHEBI:15377"/>
        <dbReference type="ChEBI" id="CHEBI:15378"/>
        <dbReference type="ChEBI" id="CHEBI:29985"/>
        <dbReference type="ChEBI" id="CHEBI:30616"/>
        <dbReference type="ChEBI" id="CHEBI:43474"/>
        <dbReference type="ChEBI" id="CHEBI:58359"/>
        <dbReference type="ChEBI" id="CHEBI:78515"/>
        <dbReference type="ChEBI" id="CHEBI:78516"/>
        <dbReference type="ChEBI" id="CHEBI:456216"/>
    </reaction>
</comment>
<comment type="subunit">
    <text evidence="1">Heterotrimer of A, B and C subunits.</text>
</comment>
<comment type="similarity">
    <text evidence="1">Belongs to the GatB/GatE family. GatB subfamily.</text>
</comment>
<proteinExistence type="inferred from homology"/>
<feature type="chain" id="PRO_0000241211" description="Aspartyl/glutamyl-tRNA(Asn/Gln) amidotransferase subunit B">
    <location>
        <begin position="1"/>
        <end position="475"/>
    </location>
</feature>
<organism>
    <name type="scientific">Chlorobium chlorochromatii (strain CaD3)</name>
    <dbReference type="NCBI Taxonomy" id="340177"/>
    <lineage>
        <taxon>Bacteria</taxon>
        <taxon>Pseudomonadati</taxon>
        <taxon>Chlorobiota</taxon>
        <taxon>Chlorobiia</taxon>
        <taxon>Chlorobiales</taxon>
        <taxon>Chlorobiaceae</taxon>
        <taxon>Chlorobium/Pelodictyon group</taxon>
        <taxon>Chlorobium</taxon>
    </lineage>
</organism>
<name>GATB_CHLCH</name>
<sequence>MDYELVVGLEVHCQLNTVTKAFCGCSAQFGKAANTNVCPVCLALPGALPVLNRQVVEDAVKIGLALDCRIAPHSVLARKNYFYPDLPKGYQISQFEEPICSDGSIDVELDGVNRTIHLIRIHIEEDAGKSIHDIGDDTFIDLNRSGVPLLEIVSYPDIRSAKEASAYLQKLRQIVKYLGISDGNMEEGSLRCDANVSLRPVGATEYGTRTEIKNMNSFKNVEKAIEYEALRHREILENGGVIIQETRLWDADKGETRSMRGKEFAHDYRYFPDPDLVPVLVDEAMIERLKLELPEFPEMRARRFAADYGIPTYDAGVLTVERELADYFEETVKLSGDAKTSSNWVMGEVMRTLKEKYLDIAEFSIRPARLAGLIQLIHNKVISNTIAKQVFEVMLNDEAEPAAIVERDGLAQVSDSGALEAVAQEVIDANPKQLAEYREGKTKLMGFFVGQCMSRMKGKANPQLVNDILLKKLEG</sequence>
<reference key="1">
    <citation type="submission" date="2005-08" db="EMBL/GenBank/DDBJ databases">
        <title>Complete sequence of Chlorobium chlorochromatii CaD3.</title>
        <authorList>
            <consortium name="US DOE Joint Genome Institute"/>
            <person name="Copeland A."/>
            <person name="Lucas S."/>
            <person name="Lapidus A."/>
            <person name="Barry K."/>
            <person name="Detter J.C."/>
            <person name="Glavina T."/>
            <person name="Hammon N."/>
            <person name="Israni S."/>
            <person name="Pitluck S."/>
            <person name="Bryant D."/>
            <person name="Schmutz J."/>
            <person name="Larimer F."/>
            <person name="Land M."/>
            <person name="Kyrpides N."/>
            <person name="Ivanova N."/>
            <person name="Richardson P."/>
        </authorList>
    </citation>
    <scope>NUCLEOTIDE SEQUENCE [LARGE SCALE GENOMIC DNA]</scope>
    <source>
        <strain>CaD3</strain>
    </source>
</reference>
<keyword id="KW-0067">ATP-binding</keyword>
<keyword id="KW-0436">Ligase</keyword>
<keyword id="KW-0547">Nucleotide-binding</keyword>
<keyword id="KW-0648">Protein biosynthesis</keyword>
<evidence type="ECO:0000255" key="1">
    <source>
        <dbReference type="HAMAP-Rule" id="MF_00121"/>
    </source>
</evidence>
<accession>Q3APF2</accession>
<gene>
    <name evidence="1" type="primary">gatB</name>
    <name type="ordered locus">Cag_1873</name>
</gene>
<protein>
    <recommendedName>
        <fullName evidence="1">Aspartyl/glutamyl-tRNA(Asn/Gln) amidotransferase subunit B</fullName>
        <shortName evidence="1">Asp/Glu-ADT subunit B</shortName>
        <ecNumber evidence="1">6.3.5.-</ecNumber>
    </recommendedName>
</protein>